<comment type="function">
    <text evidence="1">Catalyzes the interconversion of 2-phosphoglycerate and 3-phosphoglycerate.</text>
</comment>
<comment type="catalytic activity">
    <reaction evidence="1">
        <text>(2R)-2-phosphoglycerate = (2R)-3-phosphoglycerate</text>
        <dbReference type="Rhea" id="RHEA:15901"/>
        <dbReference type="ChEBI" id="CHEBI:58272"/>
        <dbReference type="ChEBI" id="CHEBI:58289"/>
        <dbReference type="EC" id="5.4.2.11"/>
    </reaction>
</comment>
<comment type="pathway">
    <text evidence="1">Carbohydrate degradation; glycolysis; pyruvate from D-glyceraldehyde 3-phosphate: step 3/5.</text>
</comment>
<comment type="similarity">
    <text evidence="1">Belongs to the phosphoglycerate mutase family. BPG-dependent PGAM subfamily.</text>
</comment>
<dbReference type="EC" id="5.4.2.11" evidence="1"/>
<dbReference type="EMBL" id="CP001129">
    <property type="protein sequence ID" value="ACG62002.1"/>
    <property type="molecule type" value="Genomic_DNA"/>
</dbReference>
<dbReference type="RefSeq" id="WP_012515278.1">
    <property type="nucleotide sequence ID" value="NC_011134.1"/>
</dbReference>
<dbReference type="SMR" id="B4U1Y5"/>
<dbReference type="KEGG" id="sez:Sez_0635"/>
<dbReference type="HOGENOM" id="CLU_033323_1_5_9"/>
<dbReference type="UniPathway" id="UPA00109">
    <property type="reaction ID" value="UER00186"/>
</dbReference>
<dbReference type="Proteomes" id="UP000001873">
    <property type="component" value="Chromosome"/>
</dbReference>
<dbReference type="GO" id="GO:0004619">
    <property type="term" value="F:phosphoglycerate mutase activity"/>
    <property type="evidence" value="ECO:0007669"/>
    <property type="project" value="UniProtKB-EC"/>
</dbReference>
<dbReference type="GO" id="GO:0006094">
    <property type="term" value="P:gluconeogenesis"/>
    <property type="evidence" value="ECO:0007669"/>
    <property type="project" value="UniProtKB-UniRule"/>
</dbReference>
<dbReference type="GO" id="GO:0006096">
    <property type="term" value="P:glycolytic process"/>
    <property type="evidence" value="ECO:0007669"/>
    <property type="project" value="UniProtKB-UniRule"/>
</dbReference>
<dbReference type="CDD" id="cd07067">
    <property type="entry name" value="HP_PGM_like"/>
    <property type="match status" value="1"/>
</dbReference>
<dbReference type="FunFam" id="3.40.50.1240:FF:000003">
    <property type="entry name" value="2,3-bisphosphoglycerate-dependent phosphoglycerate mutase"/>
    <property type="match status" value="1"/>
</dbReference>
<dbReference type="Gene3D" id="3.40.50.1240">
    <property type="entry name" value="Phosphoglycerate mutase-like"/>
    <property type="match status" value="1"/>
</dbReference>
<dbReference type="HAMAP" id="MF_01039">
    <property type="entry name" value="PGAM_GpmA"/>
    <property type="match status" value="1"/>
</dbReference>
<dbReference type="InterPro" id="IPR013078">
    <property type="entry name" value="His_Pase_superF_clade-1"/>
</dbReference>
<dbReference type="InterPro" id="IPR029033">
    <property type="entry name" value="His_PPase_superfam"/>
</dbReference>
<dbReference type="InterPro" id="IPR005952">
    <property type="entry name" value="Phosphogly_mut1"/>
</dbReference>
<dbReference type="NCBIfam" id="TIGR01258">
    <property type="entry name" value="pgm_1"/>
    <property type="match status" value="1"/>
</dbReference>
<dbReference type="NCBIfam" id="NF010713">
    <property type="entry name" value="PRK14115.1"/>
    <property type="match status" value="1"/>
</dbReference>
<dbReference type="NCBIfam" id="NF010715">
    <property type="entry name" value="PRK14117.1"/>
    <property type="match status" value="1"/>
</dbReference>
<dbReference type="PANTHER" id="PTHR11931">
    <property type="entry name" value="PHOSPHOGLYCERATE MUTASE"/>
    <property type="match status" value="1"/>
</dbReference>
<dbReference type="Pfam" id="PF00300">
    <property type="entry name" value="His_Phos_1"/>
    <property type="match status" value="1"/>
</dbReference>
<dbReference type="PIRSF" id="PIRSF000709">
    <property type="entry name" value="6PFK_2-Ptase"/>
    <property type="match status" value="1"/>
</dbReference>
<dbReference type="SMART" id="SM00855">
    <property type="entry name" value="PGAM"/>
    <property type="match status" value="1"/>
</dbReference>
<dbReference type="SUPFAM" id="SSF53254">
    <property type="entry name" value="Phosphoglycerate mutase-like"/>
    <property type="match status" value="1"/>
</dbReference>
<organism>
    <name type="scientific">Streptococcus equi subsp. zooepidemicus (strain MGCS10565)</name>
    <dbReference type="NCBI Taxonomy" id="552526"/>
    <lineage>
        <taxon>Bacteria</taxon>
        <taxon>Bacillati</taxon>
        <taxon>Bacillota</taxon>
        <taxon>Bacilli</taxon>
        <taxon>Lactobacillales</taxon>
        <taxon>Streptococcaceae</taxon>
        <taxon>Streptococcus</taxon>
    </lineage>
</organism>
<name>GPMA_STREM</name>
<feature type="chain" id="PRO_1000135979" description="2,3-bisphosphoglycerate-dependent phosphoglycerate mutase">
    <location>
        <begin position="1"/>
        <end position="231"/>
    </location>
</feature>
<feature type="active site" description="Tele-phosphohistidine intermediate" evidence="1">
    <location>
        <position position="9"/>
    </location>
</feature>
<feature type="active site" description="Proton donor/acceptor" evidence="1">
    <location>
        <position position="87"/>
    </location>
</feature>
<feature type="binding site" evidence="1">
    <location>
        <begin position="8"/>
        <end position="15"/>
    </location>
    <ligand>
        <name>substrate</name>
    </ligand>
</feature>
<feature type="binding site" evidence="1">
    <location>
        <begin position="21"/>
        <end position="22"/>
    </location>
    <ligand>
        <name>substrate</name>
    </ligand>
</feature>
<feature type="binding site" evidence="1">
    <location>
        <position position="60"/>
    </location>
    <ligand>
        <name>substrate</name>
    </ligand>
</feature>
<feature type="binding site" evidence="1">
    <location>
        <begin position="87"/>
        <end position="90"/>
    </location>
    <ligand>
        <name>substrate</name>
    </ligand>
</feature>
<feature type="binding site" evidence="1">
    <location>
        <position position="98"/>
    </location>
    <ligand>
        <name>substrate</name>
    </ligand>
</feature>
<feature type="binding site" evidence="1">
    <location>
        <begin position="114"/>
        <end position="115"/>
    </location>
    <ligand>
        <name>substrate</name>
    </ligand>
</feature>
<feature type="binding site" evidence="1">
    <location>
        <begin position="183"/>
        <end position="184"/>
    </location>
    <ligand>
        <name>substrate</name>
    </ligand>
</feature>
<feature type="site" description="Transition state stabilizer" evidence="1">
    <location>
        <position position="182"/>
    </location>
</feature>
<gene>
    <name evidence="1" type="primary">gpmA</name>
    <name type="ordered locus">Sez_0635</name>
</gene>
<proteinExistence type="inferred from homology"/>
<protein>
    <recommendedName>
        <fullName evidence="1">2,3-bisphosphoglycerate-dependent phosphoglycerate mutase</fullName>
        <shortName evidence="1">BPG-dependent PGAM</shortName>
        <shortName evidence="1">PGAM</shortName>
        <shortName evidence="1">Phosphoglyceromutase</shortName>
        <shortName evidence="1">dPGM</shortName>
        <ecNumber evidence="1">5.4.2.11</ecNumber>
    </recommendedName>
</protein>
<sequence>MVKLVFARHGESEWNKANLFTGWADVDLSEKGTQQAIDAGKLIKEAGIAFDLAFTSVLKRAIKTTNLALEYSDQLWVPVEKSWRLNERHYGGLTGKNKAEAAEQFGDEQVHIWRRSYDVLPPDMAKDDEHSAHTDRRYAHLDHSVIPDAENLKVTLERALPFWEDKIAPALVDGKNVFVGAHGNSIRALVKHIKQLSDDEIMNVEIPNFPPLVFEFDDKLNLTAEYYLGGE</sequence>
<evidence type="ECO:0000255" key="1">
    <source>
        <dbReference type="HAMAP-Rule" id="MF_01039"/>
    </source>
</evidence>
<reference key="1">
    <citation type="journal article" date="2008" name="PLoS ONE">
        <title>Genome sequence of a lancefield group C Streptococcus zooepidemicus strain causing epidemic nephritis: new information about an old disease.</title>
        <authorList>
            <person name="Beres S.B."/>
            <person name="Sesso R."/>
            <person name="Pinto S.W.L."/>
            <person name="Hoe N.P."/>
            <person name="Porcella S.F."/>
            <person name="Deleo F.R."/>
            <person name="Musser J.M."/>
        </authorList>
    </citation>
    <scope>NUCLEOTIDE SEQUENCE [LARGE SCALE GENOMIC DNA]</scope>
    <source>
        <strain>MGCS10565</strain>
    </source>
</reference>
<accession>B4U1Y5</accession>
<keyword id="KW-0312">Gluconeogenesis</keyword>
<keyword id="KW-0324">Glycolysis</keyword>
<keyword id="KW-0413">Isomerase</keyword>